<organism>
    <name type="scientific">Caenorhabditis briggsae</name>
    <dbReference type="NCBI Taxonomy" id="6238"/>
    <lineage>
        <taxon>Eukaryota</taxon>
        <taxon>Metazoa</taxon>
        <taxon>Ecdysozoa</taxon>
        <taxon>Nematoda</taxon>
        <taxon>Chromadorea</taxon>
        <taxon>Rhabditida</taxon>
        <taxon>Rhabditina</taxon>
        <taxon>Rhabditomorpha</taxon>
        <taxon>Rhabditoidea</taxon>
        <taxon>Rhabditidae</taxon>
        <taxon>Peloderinae</taxon>
        <taxon>Caenorhabditis</taxon>
    </lineage>
</organism>
<dbReference type="EMBL" id="HE601041">
    <property type="protein sequence ID" value="CAP27441.3"/>
    <property type="molecule type" value="Genomic_DNA"/>
</dbReference>
<dbReference type="FunCoup" id="A8X481">
    <property type="interactions" value="139"/>
</dbReference>
<dbReference type="STRING" id="6238.A8X481"/>
<dbReference type="GlyCosmos" id="A8X481">
    <property type="glycosylation" value="4 sites, No reported glycans"/>
</dbReference>
<dbReference type="EnsemblMetazoa" id="CBG07717a.1">
    <property type="protein sequence ID" value="CBG07717a.1"/>
    <property type="gene ID" value="WBGene00029679"/>
</dbReference>
<dbReference type="KEGG" id="cbr:CBG_07717"/>
<dbReference type="CTD" id="8587948"/>
<dbReference type="WormBase" id="CBG07717a">
    <property type="protein sequence ID" value="CBP01846"/>
    <property type="gene ID" value="WBGene00029679"/>
    <property type="gene designation" value="Cbr-eat-20"/>
</dbReference>
<dbReference type="eggNOG" id="KOG1217">
    <property type="taxonomic scope" value="Eukaryota"/>
</dbReference>
<dbReference type="HOGENOM" id="CLU_311306_0_0_1"/>
<dbReference type="InParanoid" id="A8X481"/>
<dbReference type="OMA" id="MPMSHIA"/>
<dbReference type="Proteomes" id="UP000008549">
    <property type="component" value="Unassembled WGS sequence"/>
</dbReference>
<dbReference type="GO" id="GO:0030424">
    <property type="term" value="C:axon"/>
    <property type="evidence" value="ECO:0007669"/>
    <property type="project" value="EnsemblMetazoa"/>
</dbReference>
<dbReference type="GO" id="GO:0009986">
    <property type="term" value="C:cell surface"/>
    <property type="evidence" value="ECO:0007669"/>
    <property type="project" value="EnsemblMetazoa"/>
</dbReference>
<dbReference type="GO" id="GO:0016020">
    <property type="term" value="C:membrane"/>
    <property type="evidence" value="ECO:0007669"/>
    <property type="project" value="UniProtKB-SubCell"/>
</dbReference>
<dbReference type="GO" id="GO:0005509">
    <property type="term" value="F:calcium ion binding"/>
    <property type="evidence" value="ECO:0007669"/>
    <property type="project" value="InterPro"/>
</dbReference>
<dbReference type="CDD" id="cd00054">
    <property type="entry name" value="EGF_CA"/>
    <property type="match status" value="3"/>
</dbReference>
<dbReference type="Gene3D" id="2.10.25.10">
    <property type="entry name" value="Laminin"/>
    <property type="match status" value="3"/>
</dbReference>
<dbReference type="InterPro" id="IPR001881">
    <property type="entry name" value="EGF-like_Ca-bd_dom"/>
</dbReference>
<dbReference type="InterPro" id="IPR000742">
    <property type="entry name" value="EGF-like_dom"/>
</dbReference>
<dbReference type="InterPro" id="IPR003645">
    <property type="entry name" value="Fol_N"/>
</dbReference>
<dbReference type="InterPro" id="IPR051022">
    <property type="entry name" value="Notch_Cell-Fate_Det"/>
</dbReference>
<dbReference type="PANTHER" id="PTHR24049">
    <property type="entry name" value="CRUMBS FAMILY MEMBER"/>
    <property type="match status" value="1"/>
</dbReference>
<dbReference type="Pfam" id="PF00008">
    <property type="entry name" value="EGF"/>
    <property type="match status" value="1"/>
</dbReference>
<dbReference type="SMART" id="SM00181">
    <property type="entry name" value="EGF"/>
    <property type="match status" value="4"/>
</dbReference>
<dbReference type="SMART" id="SM00179">
    <property type="entry name" value="EGF_CA"/>
    <property type="match status" value="3"/>
</dbReference>
<dbReference type="SMART" id="SM00274">
    <property type="entry name" value="FOLN"/>
    <property type="match status" value="2"/>
</dbReference>
<dbReference type="SUPFAM" id="SSF57196">
    <property type="entry name" value="EGF/Laminin"/>
    <property type="match status" value="2"/>
</dbReference>
<dbReference type="PROSITE" id="PS00022">
    <property type="entry name" value="EGF_1"/>
    <property type="match status" value="3"/>
</dbReference>
<dbReference type="PROSITE" id="PS01186">
    <property type="entry name" value="EGF_2"/>
    <property type="match status" value="2"/>
</dbReference>
<dbReference type="PROSITE" id="PS50026">
    <property type="entry name" value="EGF_3"/>
    <property type="match status" value="3"/>
</dbReference>
<sequence length="811" mass="87988">MTTFCRVLLIFGIYVAVSCAQSVEDDVFHFTNPSQGNAVWILDESSLPWTGGYQFLRSISGMPTTLLSIVDSSTGVTLGQCVAPQDATGNFSKRWEKFSWELTASGLDCQFEQGAATRVEFDRSQNPRTFSIRIQSITGPACLRDVVVQTEQATGCPPHLSRNSFTANALNCSCPYLDAANEDGETENEDVDMLANSPQFPLFKVVDPSVLGSANPPTLPPSPCANHECHNNGTCLVSQEGAAMCLCRNGFTGDRCELDVCSAVPCQNGGVCRSNNGIAYCECPPAFSGLLCESAHTDESAAPICNPECSNGQCVLKDGQPQCECRQGFTGANCNVLDVCLGDAACSMFGPSAKCVLDDNMDKMSSASLINGTYDCLCPHPIHGQFVDCMQLHAPSATSVQPSEPAVVINNVTPSFPVLEISQVPTGAPKTFTATSTTSVATQPAVPVVQTLPTTQQVPSEPFVGFTVTREPLRPFEATTTTTLPPPFQQHIITAGEQPTWSSQQPQQPSEVPVPAQTMTTFIFPQTPETTTFPPTTGATVHKFVSPNMPDENEEEEEDETTDETEETFPTPSTMQVATDSSIRSEFFTSTFPTTTDMEETDEEEDMTEEVTDSSTQPSTTVFIQPSSTTFTTEAPTTTMEEEETTEQEEIESEEAISTTTQTSLPFWMTTIAIKMPDIVASPTPMIIMPHPQPEEKMETSTEGIESEEERTTESNEEIIPKNMEPTTPSDITHHHTSSGKQSSAVASWIIATIALIVLGSLLLATSLFVLRYIRQSRKLHGKYNPAREEHNLSAAYAMPMSHIAKEERLI</sequence>
<proteinExistence type="inferred from homology"/>
<gene>
    <name type="primary">eat-20</name>
    <name type="ORF">CBG07717</name>
</gene>
<comment type="function">
    <text evidence="1">Regulates pharyngeal pumping during feeding.</text>
</comment>
<comment type="subcellular location">
    <subcellularLocation>
        <location evidence="2">Membrane</location>
        <topology evidence="2">Single-pass type I membrane protein</topology>
    </subcellularLocation>
</comment>
<reference key="1">
    <citation type="journal article" date="2003" name="PLoS Biol.">
        <title>The genome sequence of Caenorhabditis briggsae: a platform for comparative genomics.</title>
        <authorList>
            <person name="Stein L.D."/>
            <person name="Bao Z."/>
            <person name="Blasiar D."/>
            <person name="Blumenthal T."/>
            <person name="Brent M.R."/>
            <person name="Chen N."/>
            <person name="Chinwalla A."/>
            <person name="Clarke L."/>
            <person name="Clee C."/>
            <person name="Coghlan A."/>
            <person name="Coulson A."/>
            <person name="D'Eustachio P."/>
            <person name="Fitch D.H.A."/>
            <person name="Fulton L.A."/>
            <person name="Fulton R.E."/>
            <person name="Griffiths-Jones S."/>
            <person name="Harris T.W."/>
            <person name="Hillier L.W."/>
            <person name="Kamath R."/>
            <person name="Kuwabara P.E."/>
            <person name="Mardis E.R."/>
            <person name="Marra M.A."/>
            <person name="Miner T.L."/>
            <person name="Minx P."/>
            <person name="Mullikin J.C."/>
            <person name="Plumb R.W."/>
            <person name="Rogers J."/>
            <person name="Schein J.E."/>
            <person name="Sohrmann M."/>
            <person name="Spieth J."/>
            <person name="Stajich J.E."/>
            <person name="Wei C."/>
            <person name="Willey D."/>
            <person name="Wilson R.K."/>
            <person name="Durbin R.M."/>
            <person name="Waterston R.H."/>
        </authorList>
    </citation>
    <scope>NUCLEOTIDE SEQUENCE [LARGE SCALE GENOMIC DNA]</scope>
    <source>
        <strain>AF16</strain>
    </source>
</reference>
<feature type="signal peptide" evidence="2">
    <location>
        <begin position="1"/>
        <end position="20"/>
    </location>
</feature>
<feature type="chain" id="PRO_0000390713" description="Abnormal pharyngeal pumping eat-20" evidence="2">
    <location>
        <begin position="21"/>
        <end position="811"/>
    </location>
</feature>
<feature type="topological domain" description="Extracellular" evidence="2">
    <location>
        <begin position="21"/>
        <end position="749"/>
    </location>
</feature>
<feature type="transmembrane region" description="Helical" evidence="2">
    <location>
        <begin position="750"/>
        <end position="770"/>
    </location>
</feature>
<feature type="topological domain" description="Cytoplasmic" evidence="2">
    <location>
        <begin position="771"/>
        <end position="811"/>
    </location>
</feature>
<feature type="domain" description="EGF-like 1" evidence="3">
    <location>
        <begin position="220"/>
        <end position="257"/>
    </location>
</feature>
<feature type="domain" description="EGF-like 2" evidence="3">
    <location>
        <begin position="258"/>
        <end position="293"/>
    </location>
</feature>
<feature type="domain" description="EGF-like 3" evidence="3">
    <location>
        <begin position="301"/>
        <end position="335"/>
    </location>
</feature>
<feature type="region of interest" description="Disordered" evidence="4">
    <location>
        <begin position="544"/>
        <end position="579"/>
    </location>
</feature>
<feature type="region of interest" description="Disordered" evidence="4">
    <location>
        <begin position="592"/>
        <end position="659"/>
    </location>
</feature>
<feature type="region of interest" description="Disordered" evidence="4">
    <location>
        <begin position="690"/>
        <end position="739"/>
    </location>
</feature>
<feature type="compositionally biased region" description="Acidic residues" evidence="4">
    <location>
        <begin position="551"/>
        <end position="567"/>
    </location>
</feature>
<feature type="compositionally biased region" description="Polar residues" evidence="4">
    <location>
        <begin position="570"/>
        <end position="579"/>
    </location>
</feature>
<feature type="compositionally biased region" description="Acidic residues" evidence="4">
    <location>
        <begin position="597"/>
        <end position="612"/>
    </location>
</feature>
<feature type="compositionally biased region" description="Low complexity" evidence="4">
    <location>
        <begin position="626"/>
        <end position="639"/>
    </location>
</feature>
<feature type="compositionally biased region" description="Acidic residues" evidence="4">
    <location>
        <begin position="640"/>
        <end position="655"/>
    </location>
</feature>
<feature type="compositionally biased region" description="Acidic residues" evidence="4">
    <location>
        <begin position="705"/>
        <end position="717"/>
    </location>
</feature>
<feature type="glycosylation site" description="N-linked (GlcNAc...) asparagine" evidence="2">
    <location>
        <position position="90"/>
    </location>
</feature>
<feature type="glycosylation site" description="N-linked (GlcNAc...) asparagine" evidence="2">
    <location>
        <position position="171"/>
    </location>
</feature>
<feature type="glycosylation site" description="N-linked (GlcNAc...) asparagine" evidence="2">
    <location>
        <position position="232"/>
    </location>
</feature>
<feature type="glycosylation site" description="N-linked (GlcNAc...) asparagine" evidence="2">
    <location>
        <position position="371"/>
    </location>
</feature>
<feature type="disulfide bond" evidence="3">
    <location>
        <begin position="224"/>
        <end position="235"/>
    </location>
</feature>
<feature type="disulfide bond" evidence="3">
    <location>
        <begin position="229"/>
        <end position="245"/>
    </location>
</feature>
<feature type="disulfide bond" evidence="3">
    <location>
        <begin position="247"/>
        <end position="256"/>
    </location>
</feature>
<feature type="disulfide bond" evidence="3">
    <location>
        <begin position="261"/>
        <end position="272"/>
    </location>
</feature>
<feature type="disulfide bond" evidence="3">
    <location>
        <begin position="266"/>
        <end position="281"/>
    </location>
</feature>
<feature type="disulfide bond" evidence="3">
    <location>
        <begin position="283"/>
        <end position="292"/>
    </location>
</feature>
<feature type="disulfide bond" evidence="3">
    <location>
        <begin position="305"/>
        <end position="314"/>
    </location>
</feature>
<feature type="disulfide bond" evidence="3">
    <location>
        <begin position="309"/>
        <end position="323"/>
    </location>
</feature>
<feature type="disulfide bond" evidence="3">
    <location>
        <begin position="325"/>
        <end position="334"/>
    </location>
</feature>
<name>EAT20_CAEBR</name>
<accession>A8X481</accession>
<keyword id="KW-1015">Disulfide bond</keyword>
<keyword id="KW-0245">EGF-like domain</keyword>
<keyword id="KW-0325">Glycoprotein</keyword>
<keyword id="KW-0472">Membrane</keyword>
<keyword id="KW-1185">Reference proteome</keyword>
<keyword id="KW-0677">Repeat</keyword>
<keyword id="KW-0732">Signal</keyword>
<keyword id="KW-0812">Transmembrane</keyword>
<keyword id="KW-1133">Transmembrane helix</keyword>
<evidence type="ECO:0000250" key="1">
    <source>
        <dbReference type="UniProtKB" id="Q9NL29"/>
    </source>
</evidence>
<evidence type="ECO:0000255" key="2"/>
<evidence type="ECO:0000255" key="3">
    <source>
        <dbReference type="PROSITE-ProRule" id="PRU00076"/>
    </source>
</evidence>
<evidence type="ECO:0000256" key="4">
    <source>
        <dbReference type="SAM" id="MobiDB-lite"/>
    </source>
</evidence>
<protein>
    <recommendedName>
        <fullName evidence="1">Abnormal pharyngeal pumping eat-20</fullName>
    </recommendedName>
</protein>